<name>CH10_PROM2</name>
<protein>
    <recommendedName>
        <fullName evidence="1">Co-chaperonin GroES</fullName>
    </recommendedName>
    <alternativeName>
        <fullName evidence="1">10 kDa chaperonin</fullName>
    </alternativeName>
    <alternativeName>
        <fullName evidence="1">Chaperonin-10</fullName>
        <shortName evidence="1">Cpn10</shortName>
    </alternativeName>
</protein>
<sequence>MAAVSLTVSTVKPLGDRIFIKVSASEEKTAGGILLPDSAKEKPQVGEVAQVGPGKLNDDGSRQTPEVSIGDKVLYSKYAGTDIKLGGDEYVLLSEKDILAVVS</sequence>
<dbReference type="EMBL" id="CP000825">
    <property type="protein sequence ID" value="ABV51318.1"/>
    <property type="molecule type" value="Genomic_DNA"/>
</dbReference>
<dbReference type="RefSeq" id="WP_002806275.1">
    <property type="nucleotide sequence ID" value="NC_009840.1"/>
</dbReference>
<dbReference type="SMR" id="A8G6T7"/>
<dbReference type="STRING" id="93060.P9215_17051"/>
<dbReference type="KEGG" id="pmh:P9215_17051"/>
<dbReference type="eggNOG" id="COG0234">
    <property type="taxonomic scope" value="Bacteria"/>
</dbReference>
<dbReference type="HOGENOM" id="CLU_132825_2_1_3"/>
<dbReference type="OrthoDB" id="9806791at2"/>
<dbReference type="Proteomes" id="UP000002014">
    <property type="component" value="Chromosome"/>
</dbReference>
<dbReference type="GO" id="GO:0005737">
    <property type="term" value="C:cytoplasm"/>
    <property type="evidence" value="ECO:0007669"/>
    <property type="project" value="UniProtKB-SubCell"/>
</dbReference>
<dbReference type="GO" id="GO:0005524">
    <property type="term" value="F:ATP binding"/>
    <property type="evidence" value="ECO:0007669"/>
    <property type="project" value="InterPro"/>
</dbReference>
<dbReference type="GO" id="GO:0046872">
    <property type="term" value="F:metal ion binding"/>
    <property type="evidence" value="ECO:0007669"/>
    <property type="project" value="TreeGrafter"/>
</dbReference>
<dbReference type="GO" id="GO:0044183">
    <property type="term" value="F:protein folding chaperone"/>
    <property type="evidence" value="ECO:0007669"/>
    <property type="project" value="InterPro"/>
</dbReference>
<dbReference type="GO" id="GO:0051087">
    <property type="term" value="F:protein-folding chaperone binding"/>
    <property type="evidence" value="ECO:0007669"/>
    <property type="project" value="TreeGrafter"/>
</dbReference>
<dbReference type="GO" id="GO:0051082">
    <property type="term" value="F:unfolded protein binding"/>
    <property type="evidence" value="ECO:0007669"/>
    <property type="project" value="TreeGrafter"/>
</dbReference>
<dbReference type="GO" id="GO:0051085">
    <property type="term" value="P:chaperone cofactor-dependent protein refolding"/>
    <property type="evidence" value="ECO:0007669"/>
    <property type="project" value="TreeGrafter"/>
</dbReference>
<dbReference type="CDD" id="cd00320">
    <property type="entry name" value="cpn10"/>
    <property type="match status" value="1"/>
</dbReference>
<dbReference type="FunFam" id="2.30.33.40:FF:000001">
    <property type="entry name" value="10 kDa chaperonin"/>
    <property type="match status" value="1"/>
</dbReference>
<dbReference type="Gene3D" id="2.30.33.40">
    <property type="entry name" value="GroES chaperonin"/>
    <property type="match status" value="1"/>
</dbReference>
<dbReference type="HAMAP" id="MF_00580">
    <property type="entry name" value="CH10"/>
    <property type="match status" value="1"/>
</dbReference>
<dbReference type="InterPro" id="IPR020818">
    <property type="entry name" value="Chaperonin_GroES"/>
</dbReference>
<dbReference type="InterPro" id="IPR037124">
    <property type="entry name" value="Chaperonin_GroES_sf"/>
</dbReference>
<dbReference type="InterPro" id="IPR018369">
    <property type="entry name" value="Chaprnonin_Cpn10_CS"/>
</dbReference>
<dbReference type="InterPro" id="IPR011032">
    <property type="entry name" value="GroES-like_sf"/>
</dbReference>
<dbReference type="NCBIfam" id="NF001530">
    <property type="entry name" value="PRK00364.1-6"/>
    <property type="match status" value="1"/>
</dbReference>
<dbReference type="NCBIfam" id="NF001531">
    <property type="entry name" value="PRK00364.2-2"/>
    <property type="match status" value="1"/>
</dbReference>
<dbReference type="NCBIfam" id="NF001533">
    <property type="entry name" value="PRK00364.2-4"/>
    <property type="match status" value="1"/>
</dbReference>
<dbReference type="NCBIfam" id="NF001534">
    <property type="entry name" value="PRK00364.2-5"/>
    <property type="match status" value="1"/>
</dbReference>
<dbReference type="PANTHER" id="PTHR10772">
    <property type="entry name" value="10 KDA HEAT SHOCK PROTEIN"/>
    <property type="match status" value="1"/>
</dbReference>
<dbReference type="PANTHER" id="PTHR10772:SF58">
    <property type="entry name" value="CO-CHAPERONIN GROES"/>
    <property type="match status" value="1"/>
</dbReference>
<dbReference type="Pfam" id="PF00166">
    <property type="entry name" value="Cpn10"/>
    <property type="match status" value="1"/>
</dbReference>
<dbReference type="PRINTS" id="PR00297">
    <property type="entry name" value="CHAPERONIN10"/>
</dbReference>
<dbReference type="SMART" id="SM00883">
    <property type="entry name" value="Cpn10"/>
    <property type="match status" value="1"/>
</dbReference>
<dbReference type="SUPFAM" id="SSF50129">
    <property type="entry name" value="GroES-like"/>
    <property type="match status" value="1"/>
</dbReference>
<dbReference type="PROSITE" id="PS00681">
    <property type="entry name" value="CHAPERONINS_CPN10"/>
    <property type="match status" value="1"/>
</dbReference>
<reference key="1">
    <citation type="journal article" date="2007" name="PLoS Genet.">
        <title>Patterns and implications of gene gain and loss in the evolution of Prochlorococcus.</title>
        <authorList>
            <person name="Kettler G.C."/>
            <person name="Martiny A.C."/>
            <person name="Huang K."/>
            <person name="Zucker J."/>
            <person name="Coleman M.L."/>
            <person name="Rodrigue S."/>
            <person name="Chen F."/>
            <person name="Lapidus A."/>
            <person name="Ferriera S."/>
            <person name="Johnson J."/>
            <person name="Steglich C."/>
            <person name="Church G.M."/>
            <person name="Richardson P."/>
            <person name="Chisholm S.W."/>
        </authorList>
    </citation>
    <scope>NUCLEOTIDE SEQUENCE [LARGE SCALE GENOMIC DNA]</scope>
    <source>
        <strain>MIT 9215</strain>
    </source>
</reference>
<comment type="function">
    <text evidence="1">Together with the chaperonin GroEL, plays an essential role in assisting protein folding. The GroEL-GroES system forms a nano-cage that allows encapsulation of the non-native substrate proteins and provides a physical environment optimized to promote and accelerate protein folding. GroES binds to the apical surface of the GroEL ring, thereby capping the opening of the GroEL channel.</text>
</comment>
<comment type="subunit">
    <text evidence="1">Heptamer of 7 subunits arranged in a ring. Interacts with the chaperonin GroEL.</text>
</comment>
<comment type="subcellular location">
    <subcellularLocation>
        <location evidence="1">Cytoplasm</location>
    </subcellularLocation>
</comment>
<comment type="similarity">
    <text evidence="1">Belongs to the GroES chaperonin family.</text>
</comment>
<feature type="chain" id="PRO_1000061191" description="Co-chaperonin GroES">
    <location>
        <begin position="1"/>
        <end position="103"/>
    </location>
</feature>
<keyword id="KW-0143">Chaperone</keyword>
<keyword id="KW-0963">Cytoplasm</keyword>
<gene>
    <name evidence="1" type="primary">groES</name>
    <name evidence="1" type="synonym">groS</name>
    <name type="ordered locus">P9215_17051</name>
</gene>
<organism>
    <name type="scientific">Prochlorococcus marinus (strain MIT 9215)</name>
    <dbReference type="NCBI Taxonomy" id="93060"/>
    <lineage>
        <taxon>Bacteria</taxon>
        <taxon>Bacillati</taxon>
        <taxon>Cyanobacteriota</taxon>
        <taxon>Cyanophyceae</taxon>
        <taxon>Synechococcales</taxon>
        <taxon>Prochlorococcaceae</taxon>
        <taxon>Prochlorococcus</taxon>
    </lineage>
</organism>
<proteinExistence type="inferred from homology"/>
<accession>A8G6T7</accession>
<evidence type="ECO:0000255" key="1">
    <source>
        <dbReference type="HAMAP-Rule" id="MF_00580"/>
    </source>
</evidence>